<gene>
    <name evidence="1" type="primary">thiI</name>
    <name type="ordered locus">PAE3421</name>
</gene>
<protein>
    <recommendedName>
        <fullName evidence="1">tRNA sulfurtransferase</fullName>
        <ecNumber evidence="1">2.8.1.4</ecNumber>
    </recommendedName>
    <alternativeName>
        <fullName evidence="1">Sulfur carrier protein ThiS sulfurtransferase</fullName>
    </alternativeName>
    <alternativeName>
        <fullName evidence="1">Thiamine biosynthesis protein ThiI</fullName>
    </alternativeName>
    <alternativeName>
        <fullName evidence="1">tRNA 4-thiouridine synthase</fullName>
    </alternativeName>
</protein>
<organism>
    <name type="scientific">Pyrobaculum aerophilum (strain ATCC 51768 / DSM 7523 / JCM 9630 / CIP 104966 / NBRC 100827 / IM2)</name>
    <dbReference type="NCBI Taxonomy" id="178306"/>
    <lineage>
        <taxon>Archaea</taxon>
        <taxon>Thermoproteota</taxon>
        <taxon>Thermoprotei</taxon>
        <taxon>Thermoproteales</taxon>
        <taxon>Thermoproteaceae</taxon>
        <taxon>Pyrobaculum</taxon>
    </lineage>
</organism>
<dbReference type="EC" id="2.8.1.4" evidence="1"/>
<dbReference type="EMBL" id="AE009441">
    <property type="protein sequence ID" value="AAL64902.1"/>
    <property type="molecule type" value="Genomic_DNA"/>
</dbReference>
<dbReference type="RefSeq" id="WP_011009369.1">
    <property type="nucleotide sequence ID" value="NC_003364.1"/>
</dbReference>
<dbReference type="SMR" id="Q8ZT61"/>
<dbReference type="FunCoup" id="Q8ZT61">
    <property type="interactions" value="74"/>
</dbReference>
<dbReference type="STRING" id="178306.PAE3421"/>
<dbReference type="EnsemblBacteria" id="AAL64902">
    <property type="protein sequence ID" value="AAL64902"/>
    <property type="gene ID" value="PAE3421"/>
</dbReference>
<dbReference type="GeneID" id="1464099"/>
<dbReference type="KEGG" id="pai:PAE3421"/>
<dbReference type="PATRIC" id="fig|178306.9.peg.2571"/>
<dbReference type="eggNOG" id="arCOG00038">
    <property type="taxonomic scope" value="Archaea"/>
</dbReference>
<dbReference type="eggNOG" id="arCOG02021">
    <property type="taxonomic scope" value="Archaea"/>
</dbReference>
<dbReference type="HOGENOM" id="CLU_037952_4_1_2"/>
<dbReference type="InParanoid" id="Q8ZT61"/>
<dbReference type="UniPathway" id="UPA00060"/>
<dbReference type="Proteomes" id="UP000002439">
    <property type="component" value="Chromosome"/>
</dbReference>
<dbReference type="GO" id="GO:0005829">
    <property type="term" value="C:cytosol"/>
    <property type="evidence" value="ECO:0000318"/>
    <property type="project" value="GO_Central"/>
</dbReference>
<dbReference type="GO" id="GO:0005524">
    <property type="term" value="F:ATP binding"/>
    <property type="evidence" value="ECO:0007669"/>
    <property type="project" value="UniProtKB-UniRule"/>
</dbReference>
<dbReference type="GO" id="GO:0004810">
    <property type="term" value="F:CCA tRNA nucleotidyltransferase activity"/>
    <property type="evidence" value="ECO:0007669"/>
    <property type="project" value="InterPro"/>
</dbReference>
<dbReference type="GO" id="GO:0000049">
    <property type="term" value="F:tRNA binding"/>
    <property type="evidence" value="ECO:0007669"/>
    <property type="project" value="UniProtKB-UniRule"/>
</dbReference>
<dbReference type="GO" id="GO:0140741">
    <property type="term" value="F:tRNA-uracil-4 sulfurtransferase activity"/>
    <property type="evidence" value="ECO:0007669"/>
    <property type="project" value="UniProtKB-EC"/>
</dbReference>
<dbReference type="GO" id="GO:0009228">
    <property type="term" value="P:thiamine biosynthetic process"/>
    <property type="evidence" value="ECO:0007669"/>
    <property type="project" value="UniProtKB-KW"/>
</dbReference>
<dbReference type="GO" id="GO:0009229">
    <property type="term" value="P:thiamine diphosphate biosynthetic process"/>
    <property type="evidence" value="ECO:0007669"/>
    <property type="project" value="UniProtKB-UniRule"/>
</dbReference>
<dbReference type="GO" id="GO:0052837">
    <property type="term" value="P:thiazole biosynthetic process"/>
    <property type="evidence" value="ECO:0000318"/>
    <property type="project" value="GO_Central"/>
</dbReference>
<dbReference type="GO" id="GO:0002937">
    <property type="term" value="P:tRNA 4-thiouridine biosynthesis"/>
    <property type="evidence" value="ECO:0000318"/>
    <property type="project" value="GO_Central"/>
</dbReference>
<dbReference type="CDD" id="cd01712">
    <property type="entry name" value="PPase_ThiI"/>
    <property type="match status" value="1"/>
</dbReference>
<dbReference type="CDD" id="cd00158">
    <property type="entry name" value="RHOD"/>
    <property type="match status" value="1"/>
</dbReference>
<dbReference type="CDD" id="cd11716">
    <property type="entry name" value="THUMP_ThiI"/>
    <property type="match status" value="1"/>
</dbReference>
<dbReference type="Gene3D" id="3.30.2130.30">
    <property type="match status" value="1"/>
</dbReference>
<dbReference type="Gene3D" id="3.40.50.620">
    <property type="entry name" value="HUPs"/>
    <property type="match status" value="1"/>
</dbReference>
<dbReference type="Gene3D" id="3.40.250.10">
    <property type="entry name" value="Rhodanese-like domain"/>
    <property type="match status" value="1"/>
</dbReference>
<dbReference type="HAMAP" id="MF_00021">
    <property type="entry name" value="ThiI"/>
    <property type="match status" value="1"/>
</dbReference>
<dbReference type="InterPro" id="IPR001763">
    <property type="entry name" value="Rhodanese-like_dom"/>
</dbReference>
<dbReference type="InterPro" id="IPR036873">
    <property type="entry name" value="Rhodanese-like_dom_sf"/>
</dbReference>
<dbReference type="InterPro" id="IPR014729">
    <property type="entry name" value="Rossmann-like_a/b/a_fold"/>
</dbReference>
<dbReference type="InterPro" id="IPR020536">
    <property type="entry name" value="ThiI_AANH"/>
</dbReference>
<dbReference type="InterPro" id="IPR054173">
    <property type="entry name" value="ThiI_fer"/>
</dbReference>
<dbReference type="InterPro" id="IPR049961">
    <property type="entry name" value="ThiI_N"/>
</dbReference>
<dbReference type="InterPro" id="IPR004114">
    <property type="entry name" value="THUMP_dom"/>
</dbReference>
<dbReference type="InterPro" id="IPR049962">
    <property type="entry name" value="THUMP_ThiI"/>
</dbReference>
<dbReference type="InterPro" id="IPR003720">
    <property type="entry name" value="tRNA_STrfase"/>
</dbReference>
<dbReference type="InterPro" id="IPR050102">
    <property type="entry name" value="tRNA_sulfurtransferase_ThiI"/>
</dbReference>
<dbReference type="NCBIfam" id="TIGR00342">
    <property type="entry name" value="tRNA uracil 4-sulfurtransferase ThiI"/>
    <property type="match status" value="1"/>
</dbReference>
<dbReference type="PANTHER" id="PTHR43209">
    <property type="entry name" value="TRNA SULFURTRANSFERASE"/>
    <property type="match status" value="1"/>
</dbReference>
<dbReference type="PANTHER" id="PTHR43209:SF1">
    <property type="entry name" value="TRNA SULFURTRANSFERASE"/>
    <property type="match status" value="1"/>
</dbReference>
<dbReference type="Pfam" id="PF00581">
    <property type="entry name" value="Rhodanese"/>
    <property type="match status" value="1"/>
</dbReference>
<dbReference type="Pfam" id="PF02568">
    <property type="entry name" value="ThiI"/>
    <property type="match status" value="1"/>
</dbReference>
<dbReference type="Pfam" id="PF22025">
    <property type="entry name" value="ThiI_fer"/>
    <property type="match status" value="1"/>
</dbReference>
<dbReference type="Pfam" id="PF02926">
    <property type="entry name" value="THUMP"/>
    <property type="match status" value="1"/>
</dbReference>
<dbReference type="SMART" id="SM00450">
    <property type="entry name" value="RHOD"/>
    <property type="match status" value="1"/>
</dbReference>
<dbReference type="SMART" id="SM00981">
    <property type="entry name" value="THUMP"/>
    <property type="match status" value="1"/>
</dbReference>
<dbReference type="SUPFAM" id="SSF52402">
    <property type="entry name" value="Adenine nucleotide alpha hydrolases-like"/>
    <property type="match status" value="1"/>
</dbReference>
<dbReference type="SUPFAM" id="SSF52821">
    <property type="entry name" value="Rhodanese/Cell cycle control phosphatase"/>
    <property type="match status" value="1"/>
</dbReference>
<dbReference type="SUPFAM" id="SSF143437">
    <property type="entry name" value="THUMP domain-like"/>
    <property type="match status" value="1"/>
</dbReference>
<dbReference type="PROSITE" id="PS50206">
    <property type="entry name" value="RHODANESE_3"/>
    <property type="match status" value="1"/>
</dbReference>
<dbReference type="PROSITE" id="PS51165">
    <property type="entry name" value="THUMP"/>
    <property type="match status" value="1"/>
</dbReference>
<name>THII_PYRAE</name>
<proteinExistence type="inferred from homology"/>
<comment type="function">
    <text evidence="1">Catalyzes the ATP-dependent transfer of a sulfur to tRNA to produce 4-thiouridine in position 8 of tRNAs, which functions as a near-UV photosensor. Also catalyzes the transfer of sulfur to the sulfur carrier protein ThiS, forming ThiS-thiocarboxylate. This is a step in the synthesis of thiazole, in the thiamine biosynthesis pathway. The sulfur is donated as persulfide by IscS.</text>
</comment>
<comment type="catalytic activity">
    <reaction evidence="1">
        <text>[ThiI sulfur-carrier protein]-S-sulfanyl-L-cysteine + a uridine in tRNA + 2 reduced [2Fe-2S]-[ferredoxin] + ATP + H(+) = [ThiI sulfur-carrier protein]-L-cysteine + a 4-thiouridine in tRNA + 2 oxidized [2Fe-2S]-[ferredoxin] + AMP + diphosphate</text>
        <dbReference type="Rhea" id="RHEA:24176"/>
        <dbReference type="Rhea" id="RHEA-COMP:10000"/>
        <dbReference type="Rhea" id="RHEA-COMP:10001"/>
        <dbReference type="Rhea" id="RHEA-COMP:13337"/>
        <dbReference type="Rhea" id="RHEA-COMP:13338"/>
        <dbReference type="Rhea" id="RHEA-COMP:13339"/>
        <dbReference type="Rhea" id="RHEA-COMP:13340"/>
        <dbReference type="ChEBI" id="CHEBI:15378"/>
        <dbReference type="ChEBI" id="CHEBI:29950"/>
        <dbReference type="ChEBI" id="CHEBI:30616"/>
        <dbReference type="ChEBI" id="CHEBI:33019"/>
        <dbReference type="ChEBI" id="CHEBI:33737"/>
        <dbReference type="ChEBI" id="CHEBI:33738"/>
        <dbReference type="ChEBI" id="CHEBI:61963"/>
        <dbReference type="ChEBI" id="CHEBI:65315"/>
        <dbReference type="ChEBI" id="CHEBI:136798"/>
        <dbReference type="ChEBI" id="CHEBI:456215"/>
        <dbReference type="EC" id="2.8.1.4"/>
    </reaction>
</comment>
<comment type="catalytic activity">
    <reaction evidence="1">
        <text>[ThiS sulfur-carrier protein]-C-terminal Gly-Gly-AMP + S-sulfanyl-L-cysteinyl-[cysteine desulfurase] + AH2 = [ThiS sulfur-carrier protein]-C-terminal-Gly-aminoethanethioate + L-cysteinyl-[cysteine desulfurase] + A + AMP + 2 H(+)</text>
        <dbReference type="Rhea" id="RHEA:43340"/>
        <dbReference type="Rhea" id="RHEA-COMP:12157"/>
        <dbReference type="Rhea" id="RHEA-COMP:12158"/>
        <dbReference type="Rhea" id="RHEA-COMP:12910"/>
        <dbReference type="Rhea" id="RHEA-COMP:19908"/>
        <dbReference type="ChEBI" id="CHEBI:13193"/>
        <dbReference type="ChEBI" id="CHEBI:15378"/>
        <dbReference type="ChEBI" id="CHEBI:17499"/>
        <dbReference type="ChEBI" id="CHEBI:29950"/>
        <dbReference type="ChEBI" id="CHEBI:61963"/>
        <dbReference type="ChEBI" id="CHEBI:90618"/>
        <dbReference type="ChEBI" id="CHEBI:232372"/>
        <dbReference type="ChEBI" id="CHEBI:456215"/>
    </reaction>
</comment>
<comment type="pathway">
    <text evidence="1">Cofactor biosynthesis; thiamine diphosphate biosynthesis.</text>
</comment>
<comment type="subcellular location">
    <subcellularLocation>
        <location evidence="1">Cytoplasm</location>
    </subcellularLocation>
</comment>
<comment type="similarity">
    <text evidence="1">Belongs to the ThiI family.</text>
</comment>
<accession>Q8ZT61</accession>
<reference key="1">
    <citation type="journal article" date="2002" name="Proc. Natl. Acad. Sci. U.S.A.">
        <title>Genome sequence of the hyperthermophilic crenarchaeon Pyrobaculum aerophilum.</title>
        <authorList>
            <person name="Fitz-Gibbon S.T."/>
            <person name="Ladner H."/>
            <person name="Kim U.-J."/>
            <person name="Stetter K.O."/>
            <person name="Simon M.I."/>
            <person name="Miller J.H."/>
        </authorList>
    </citation>
    <scope>NUCLEOTIDE SEQUENCE [LARGE SCALE GENOMIC DNA]</scope>
    <source>
        <strain>ATCC 51768 / DSM 7523 / JCM 9630 / CIP 104966 / NBRC 100827 / IM2</strain>
    </source>
</reference>
<keyword id="KW-0067">ATP-binding</keyword>
<keyword id="KW-0963">Cytoplasm</keyword>
<keyword id="KW-1015">Disulfide bond</keyword>
<keyword id="KW-0547">Nucleotide-binding</keyword>
<keyword id="KW-0676">Redox-active center</keyword>
<keyword id="KW-1185">Reference proteome</keyword>
<keyword id="KW-0694">RNA-binding</keyword>
<keyword id="KW-0784">Thiamine biosynthesis</keyword>
<keyword id="KW-0808">Transferase</keyword>
<keyword id="KW-0820">tRNA-binding</keyword>
<feature type="chain" id="PRO_0000154897" description="tRNA sulfurtransferase">
    <location>
        <begin position="1"/>
        <end position="484"/>
    </location>
</feature>
<feature type="domain" description="THUMP" evidence="1">
    <location>
        <begin position="56"/>
        <end position="158"/>
    </location>
</feature>
<feature type="domain" description="Rhodanese" evidence="1">
    <location>
        <begin position="396"/>
        <end position="479"/>
    </location>
</feature>
<feature type="active site" description="Cysteine persulfide intermediate" evidence="1">
    <location>
        <position position="444"/>
    </location>
</feature>
<feature type="binding site" evidence="1">
    <location>
        <begin position="176"/>
        <end position="177"/>
    </location>
    <ligand>
        <name>ATP</name>
        <dbReference type="ChEBI" id="CHEBI:30616"/>
    </ligand>
</feature>
<feature type="binding site" evidence="1">
    <location>
        <position position="257"/>
    </location>
    <ligand>
        <name>ATP</name>
        <dbReference type="ChEBI" id="CHEBI:30616"/>
    </ligand>
</feature>
<feature type="binding site" evidence="1">
    <location>
        <position position="279"/>
    </location>
    <ligand>
        <name>ATP</name>
        <dbReference type="ChEBI" id="CHEBI:30616"/>
    </ligand>
</feature>
<feature type="binding site" evidence="1">
    <location>
        <position position="288"/>
    </location>
    <ligand>
        <name>ATP</name>
        <dbReference type="ChEBI" id="CHEBI:30616"/>
    </ligand>
</feature>
<feature type="disulfide bond" description="Redox-active" evidence="1">
    <location>
        <begin position="336"/>
        <end position="444"/>
    </location>
</feature>
<evidence type="ECO:0000255" key="1">
    <source>
        <dbReference type="HAMAP-Rule" id="MF_00021"/>
    </source>
</evidence>
<sequence>MEVVIIRVGELTVKRGLTRAEMERLLLRAAREAAEECGGARFEKEPGRIYAYGDVNCLKKALSKVFGVKSVSPARVITYQKITDIALEAADLWSGIVAGKRFAVRVHRVGEHAFTSREVAAEVGAVLVAAGGRVDLEDPELEFYIEIRGNRAYFYTEVIEGPGGLPLGSEGKVLALVSAGIDSPVAAWMLMRRGAHVDVLYCNLGGTITLRHALEVIKRLLAWSYGYNARVIIADCGPVARAMRRGVREELWNIAFKRALYRIGVEIAKRLGAIALATGESLGQVSSQTLQALAAVEAGIDMPILRPLIGMDKDEIVKHAQKIGTYELSAKLPEYCAVFSRRPRKWALREEVEAIDLALYDAITEVVNNAKIVRKRELDEFIKALTPPHDIEIDSAPEGAVIVDLRDEESYKKWHLPGAVRAGVDDVLALVDKLGRDKTYVFYCYSGGLSLDVAESLRKLGIKAYSLRRTRNAVPPSSQGERGN</sequence>